<sequence>MLKGRIALNILQSQKPIVFSASQQRWQTNVPTAEIRNDPEWLQAKPFEEIPKANILSLFAKSALPGGKYKNLEMMEMIDALRQDYGNIIFLPGMMGRDGLVMTHNPKDFEVVFRNEGVWPFRPGSDILRYHRTVYRKDFFDGVQGIIPSQGKSWGDFRSIVNPVLMQPKNVRLYFKKMSQVNQEFVELIKEIRDASTQEVPGNFLETINRWTLESVSVVALDKQLGLLRESGKNSEATKLFKYLDEFFLHSADLEMKPSLWRYFKTPLLKKMLRTMDSVQEVTLKYVDEAIERLEKEAKEGVVRPEHEQSVLEKLLKVDKKVATVMAMDMLMAGVDTTSSTFTALLLCLAKNPEKQARLREEVMKVLPNKDSEFTEASMKNVPYLRACIKESQRVYPLVIGNARGLTRDSVISGYRVPAGTIVSMIPINSLYSEEYFPKPTEFLPERWLRNASDSAGKCPANDLKTKNPFVFLPFGFGPRMCVGKRIVEMELELGTARLIRNFNVEFNHSTKNAFRSALINLPNIPLKFKFTDVPN</sequence>
<dbReference type="EC" id="1.14.-.-"/>
<dbReference type="EMBL" id="AY459354">
    <property type="protein sequence ID" value="AAR88135.1"/>
    <property type="molecule type" value="mRNA"/>
</dbReference>
<dbReference type="EMBL" id="AE014297">
    <property type="protein sequence ID" value="AAF55635.1"/>
    <property type="molecule type" value="Genomic_DNA"/>
</dbReference>
<dbReference type="EMBL" id="AY129460">
    <property type="protein sequence ID" value="AAM76202.1"/>
    <property type="molecule type" value="mRNA"/>
</dbReference>
<dbReference type="RefSeq" id="NP_650782.1">
    <property type="nucleotide sequence ID" value="NM_142525.4"/>
</dbReference>
<dbReference type="SMR" id="Q9VE01"/>
<dbReference type="BioGRID" id="67291">
    <property type="interactions" value="2"/>
</dbReference>
<dbReference type="DIP" id="DIP-20196N"/>
<dbReference type="FunCoup" id="Q9VE01">
    <property type="interactions" value="17"/>
</dbReference>
<dbReference type="IntAct" id="Q9VE01">
    <property type="interactions" value="3"/>
</dbReference>
<dbReference type="STRING" id="7227.FBpp0083144"/>
<dbReference type="PaxDb" id="7227-FBpp0083144"/>
<dbReference type="EnsemblMetazoa" id="FBtr0083730">
    <property type="protein sequence ID" value="FBpp0083144"/>
    <property type="gene ID" value="FBgn0038680"/>
</dbReference>
<dbReference type="GeneID" id="42293"/>
<dbReference type="KEGG" id="dme:Dmel_CG11821"/>
<dbReference type="UCSC" id="CG11821-RA">
    <property type="organism name" value="d. melanogaster"/>
</dbReference>
<dbReference type="AGR" id="FB:FBgn0038680"/>
<dbReference type="CTD" id="42293"/>
<dbReference type="FlyBase" id="FBgn0038680">
    <property type="gene designation" value="Cyp12a5"/>
</dbReference>
<dbReference type="VEuPathDB" id="VectorBase:FBgn0038680"/>
<dbReference type="eggNOG" id="KOG0159">
    <property type="taxonomic scope" value="Eukaryota"/>
</dbReference>
<dbReference type="GeneTree" id="ENSGT00940000165868"/>
<dbReference type="HOGENOM" id="CLU_001570_28_0_1"/>
<dbReference type="InParanoid" id="Q9VE01"/>
<dbReference type="OMA" id="RPEHEQS"/>
<dbReference type="OrthoDB" id="3945418at2759"/>
<dbReference type="PhylomeDB" id="Q9VE01"/>
<dbReference type="BioGRID-ORCS" id="42293">
    <property type="hits" value="0 hits in 3 CRISPR screens"/>
</dbReference>
<dbReference type="GenomeRNAi" id="42293"/>
<dbReference type="PRO" id="PR:Q9VE01"/>
<dbReference type="Proteomes" id="UP000000803">
    <property type="component" value="Chromosome 3R"/>
</dbReference>
<dbReference type="Bgee" id="FBgn0038680">
    <property type="expression patterns" value="Expressed in enterocyte of anterior adult midgut epithelium in digestive tract and 45 other cell types or tissues"/>
</dbReference>
<dbReference type="GO" id="GO:0031966">
    <property type="term" value="C:mitochondrial membrane"/>
    <property type="evidence" value="ECO:0007669"/>
    <property type="project" value="UniProtKB-SubCell"/>
</dbReference>
<dbReference type="GO" id="GO:0020037">
    <property type="term" value="F:heme binding"/>
    <property type="evidence" value="ECO:0007669"/>
    <property type="project" value="InterPro"/>
</dbReference>
<dbReference type="GO" id="GO:0005506">
    <property type="term" value="F:iron ion binding"/>
    <property type="evidence" value="ECO:0007669"/>
    <property type="project" value="InterPro"/>
</dbReference>
<dbReference type="GO" id="GO:0004497">
    <property type="term" value="F:monooxygenase activity"/>
    <property type="evidence" value="ECO:0007669"/>
    <property type="project" value="UniProtKB-KW"/>
</dbReference>
<dbReference type="GO" id="GO:0016705">
    <property type="term" value="F:oxidoreductase activity, acting on paired donors, with incorporation or reduction of molecular oxygen"/>
    <property type="evidence" value="ECO:0007669"/>
    <property type="project" value="InterPro"/>
</dbReference>
<dbReference type="CDD" id="cd11054">
    <property type="entry name" value="CYP24A1-like"/>
    <property type="match status" value="1"/>
</dbReference>
<dbReference type="FunFam" id="1.10.630.10:FF:000006">
    <property type="entry name" value="Cytochrome P450 302a1, mitochondrial"/>
    <property type="match status" value="1"/>
</dbReference>
<dbReference type="Gene3D" id="1.10.630.10">
    <property type="entry name" value="Cytochrome P450"/>
    <property type="match status" value="1"/>
</dbReference>
<dbReference type="InterPro" id="IPR050479">
    <property type="entry name" value="CYP11_CYP27_families"/>
</dbReference>
<dbReference type="InterPro" id="IPR001128">
    <property type="entry name" value="Cyt_P450"/>
</dbReference>
<dbReference type="InterPro" id="IPR017972">
    <property type="entry name" value="Cyt_P450_CS"/>
</dbReference>
<dbReference type="InterPro" id="IPR002401">
    <property type="entry name" value="Cyt_P450_E_grp-I"/>
</dbReference>
<dbReference type="InterPro" id="IPR036396">
    <property type="entry name" value="Cyt_P450_sf"/>
</dbReference>
<dbReference type="PANTHER" id="PTHR24279">
    <property type="entry name" value="CYTOCHROME P450"/>
    <property type="match status" value="1"/>
</dbReference>
<dbReference type="PANTHER" id="PTHR24279:SF120">
    <property type="entry name" value="CYTOCHROME P450"/>
    <property type="match status" value="1"/>
</dbReference>
<dbReference type="Pfam" id="PF00067">
    <property type="entry name" value="p450"/>
    <property type="match status" value="1"/>
</dbReference>
<dbReference type="PRINTS" id="PR00463">
    <property type="entry name" value="EP450I"/>
</dbReference>
<dbReference type="PRINTS" id="PR00385">
    <property type="entry name" value="P450"/>
</dbReference>
<dbReference type="SUPFAM" id="SSF48264">
    <property type="entry name" value="Cytochrome P450"/>
    <property type="match status" value="1"/>
</dbReference>
<dbReference type="PROSITE" id="PS00086">
    <property type="entry name" value="CYTOCHROME_P450"/>
    <property type="match status" value="1"/>
</dbReference>
<reference key="1">
    <citation type="journal article" date="2005" name="Insect Mol. Biol.">
        <title>Expression of Cyp6g1 and Cyp12d1 in DDT resistant and susceptible strains of Drosophila melanogaster.</title>
        <authorList>
            <person name="Festucci-Buselli R.A."/>
            <person name="Carvalho-Dias A.S."/>
            <person name="de Oliveira-Andrade M."/>
            <person name="Caixeta-Nunes C."/>
            <person name="Li H.-M."/>
            <person name="Stuart J.J."/>
            <person name="Muir W."/>
            <person name="Scharf M.E."/>
            <person name="Pittendrigh B.R."/>
        </authorList>
    </citation>
    <scope>NUCLEOTIDE SEQUENCE [MRNA]</scope>
</reference>
<reference key="2">
    <citation type="journal article" date="2000" name="Science">
        <title>The genome sequence of Drosophila melanogaster.</title>
        <authorList>
            <person name="Adams M.D."/>
            <person name="Celniker S.E."/>
            <person name="Holt R.A."/>
            <person name="Evans C.A."/>
            <person name="Gocayne J.D."/>
            <person name="Amanatides P.G."/>
            <person name="Scherer S.E."/>
            <person name="Li P.W."/>
            <person name="Hoskins R.A."/>
            <person name="Galle R.F."/>
            <person name="George R.A."/>
            <person name="Lewis S.E."/>
            <person name="Richards S."/>
            <person name="Ashburner M."/>
            <person name="Henderson S.N."/>
            <person name="Sutton G.G."/>
            <person name="Wortman J.R."/>
            <person name="Yandell M.D."/>
            <person name="Zhang Q."/>
            <person name="Chen L.X."/>
            <person name="Brandon R.C."/>
            <person name="Rogers Y.-H.C."/>
            <person name="Blazej R.G."/>
            <person name="Champe M."/>
            <person name="Pfeiffer B.D."/>
            <person name="Wan K.H."/>
            <person name="Doyle C."/>
            <person name="Baxter E.G."/>
            <person name="Helt G."/>
            <person name="Nelson C.R."/>
            <person name="Miklos G.L.G."/>
            <person name="Abril J.F."/>
            <person name="Agbayani A."/>
            <person name="An H.-J."/>
            <person name="Andrews-Pfannkoch C."/>
            <person name="Baldwin D."/>
            <person name="Ballew R.M."/>
            <person name="Basu A."/>
            <person name="Baxendale J."/>
            <person name="Bayraktaroglu L."/>
            <person name="Beasley E.M."/>
            <person name="Beeson K.Y."/>
            <person name="Benos P.V."/>
            <person name="Berman B.P."/>
            <person name="Bhandari D."/>
            <person name="Bolshakov S."/>
            <person name="Borkova D."/>
            <person name="Botchan M.R."/>
            <person name="Bouck J."/>
            <person name="Brokstein P."/>
            <person name="Brottier P."/>
            <person name="Burtis K.C."/>
            <person name="Busam D.A."/>
            <person name="Butler H."/>
            <person name="Cadieu E."/>
            <person name="Center A."/>
            <person name="Chandra I."/>
            <person name="Cherry J.M."/>
            <person name="Cawley S."/>
            <person name="Dahlke C."/>
            <person name="Davenport L.B."/>
            <person name="Davies P."/>
            <person name="de Pablos B."/>
            <person name="Delcher A."/>
            <person name="Deng Z."/>
            <person name="Mays A.D."/>
            <person name="Dew I."/>
            <person name="Dietz S.M."/>
            <person name="Dodson K."/>
            <person name="Doup L.E."/>
            <person name="Downes M."/>
            <person name="Dugan-Rocha S."/>
            <person name="Dunkov B.C."/>
            <person name="Dunn P."/>
            <person name="Durbin K.J."/>
            <person name="Evangelista C.C."/>
            <person name="Ferraz C."/>
            <person name="Ferriera S."/>
            <person name="Fleischmann W."/>
            <person name="Fosler C."/>
            <person name="Gabrielian A.E."/>
            <person name="Garg N.S."/>
            <person name="Gelbart W.M."/>
            <person name="Glasser K."/>
            <person name="Glodek A."/>
            <person name="Gong F."/>
            <person name="Gorrell J.H."/>
            <person name="Gu Z."/>
            <person name="Guan P."/>
            <person name="Harris M."/>
            <person name="Harris N.L."/>
            <person name="Harvey D.A."/>
            <person name="Heiman T.J."/>
            <person name="Hernandez J.R."/>
            <person name="Houck J."/>
            <person name="Hostin D."/>
            <person name="Houston K.A."/>
            <person name="Howland T.J."/>
            <person name="Wei M.-H."/>
            <person name="Ibegwam C."/>
            <person name="Jalali M."/>
            <person name="Kalush F."/>
            <person name="Karpen G.H."/>
            <person name="Ke Z."/>
            <person name="Kennison J.A."/>
            <person name="Ketchum K.A."/>
            <person name="Kimmel B.E."/>
            <person name="Kodira C.D."/>
            <person name="Kraft C.L."/>
            <person name="Kravitz S."/>
            <person name="Kulp D."/>
            <person name="Lai Z."/>
            <person name="Lasko P."/>
            <person name="Lei Y."/>
            <person name="Levitsky A.A."/>
            <person name="Li J.H."/>
            <person name="Li Z."/>
            <person name="Liang Y."/>
            <person name="Lin X."/>
            <person name="Liu X."/>
            <person name="Mattei B."/>
            <person name="McIntosh T.C."/>
            <person name="McLeod M.P."/>
            <person name="McPherson D."/>
            <person name="Merkulov G."/>
            <person name="Milshina N.V."/>
            <person name="Mobarry C."/>
            <person name="Morris J."/>
            <person name="Moshrefi A."/>
            <person name="Mount S.M."/>
            <person name="Moy M."/>
            <person name="Murphy B."/>
            <person name="Murphy L."/>
            <person name="Muzny D.M."/>
            <person name="Nelson D.L."/>
            <person name="Nelson D.R."/>
            <person name="Nelson K.A."/>
            <person name="Nixon K."/>
            <person name="Nusskern D.R."/>
            <person name="Pacleb J.M."/>
            <person name="Palazzolo M."/>
            <person name="Pittman G.S."/>
            <person name="Pan S."/>
            <person name="Pollard J."/>
            <person name="Puri V."/>
            <person name="Reese M.G."/>
            <person name="Reinert K."/>
            <person name="Remington K."/>
            <person name="Saunders R.D.C."/>
            <person name="Scheeler F."/>
            <person name="Shen H."/>
            <person name="Shue B.C."/>
            <person name="Siden-Kiamos I."/>
            <person name="Simpson M."/>
            <person name="Skupski M.P."/>
            <person name="Smith T.J."/>
            <person name="Spier E."/>
            <person name="Spradling A.C."/>
            <person name="Stapleton M."/>
            <person name="Strong R."/>
            <person name="Sun E."/>
            <person name="Svirskas R."/>
            <person name="Tector C."/>
            <person name="Turner R."/>
            <person name="Venter E."/>
            <person name="Wang A.H."/>
            <person name="Wang X."/>
            <person name="Wang Z.-Y."/>
            <person name="Wassarman D.A."/>
            <person name="Weinstock G.M."/>
            <person name="Weissenbach J."/>
            <person name="Williams S.M."/>
            <person name="Woodage T."/>
            <person name="Worley K.C."/>
            <person name="Wu D."/>
            <person name="Yang S."/>
            <person name="Yao Q.A."/>
            <person name="Ye J."/>
            <person name="Yeh R.-F."/>
            <person name="Zaveri J.S."/>
            <person name="Zhan M."/>
            <person name="Zhang G."/>
            <person name="Zhao Q."/>
            <person name="Zheng L."/>
            <person name="Zheng X.H."/>
            <person name="Zhong F.N."/>
            <person name="Zhong W."/>
            <person name="Zhou X."/>
            <person name="Zhu S.C."/>
            <person name="Zhu X."/>
            <person name="Smith H.O."/>
            <person name="Gibbs R.A."/>
            <person name="Myers E.W."/>
            <person name="Rubin G.M."/>
            <person name="Venter J.C."/>
        </authorList>
    </citation>
    <scope>NUCLEOTIDE SEQUENCE [LARGE SCALE GENOMIC DNA]</scope>
    <source>
        <strain>Berkeley</strain>
    </source>
</reference>
<reference key="3">
    <citation type="journal article" date="2002" name="Genome Biol.">
        <title>Annotation of the Drosophila melanogaster euchromatic genome: a systematic review.</title>
        <authorList>
            <person name="Misra S."/>
            <person name="Crosby M.A."/>
            <person name="Mungall C.J."/>
            <person name="Matthews B.B."/>
            <person name="Campbell K.S."/>
            <person name="Hradecky P."/>
            <person name="Huang Y."/>
            <person name="Kaminker J.S."/>
            <person name="Millburn G.H."/>
            <person name="Prochnik S.E."/>
            <person name="Smith C.D."/>
            <person name="Tupy J.L."/>
            <person name="Whitfield E.J."/>
            <person name="Bayraktaroglu L."/>
            <person name="Berman B.P."/>
            <person name="Bettencourt B.R."/>
            <person name="Celniker S.E."/>
            <person name="de Grey A.D.N.J."/>
            <person name="Drysdale R.A."/>
            <person name="Harris N.L."/>
            <person name="Richter J."/>
            <person name="Russo S."/>
            <person name="Schroeder A.J."/>
            <person name="Shu S.Q."/>
            <person name="Stapleton M."/>
            <person name="Yamada C."/>
            <person name="Ashburner M."/>
            <person name="Gelbart W.M."/>
            <person name="Rubin G.M."/>
            <person name="Lewis S.E."/>
        </authorList>
    </citation>
    <scope>GENOME REANNOTATION</scope>
    <source>
        <strain>Berkeley</strain>
    </source>
</reference>
<reference key="4">
    <citation type="journal article" date="2002" name="Genome Biol.">
        <title>A Drosophila full-length cDNA resource.</title>
        <authorList>
            <person name="Stapleton M."/>
            <person name="Carlson J.W."/>
            <person name="Brokstein P."/>
            <person name="Yu C."/>
            <person name="Champe M."/>
            <person name="George R.A."/>
            <person name="Guarin H."/>
            <person name="Kronmiller B."/>
            <person name="Pacleb J.M."/>
            <person name="Park S."/>
            <person name="Wan K.H."/>
            <person name="Rubin G.M."/>
            <person name="Celniker S.E."/>
        </authorList>
    </citation>
    <scope>NUCLEOTIDE SEQUENCE [LARGE SCALE MRNA]</scope>
    <source>
        <strain>Berkeley</strain>
        <tissue>Head</tissue>
    </source>
</reference>
<evidence type="ECO:0000250" key="1"/>
<evidence type="ECO:0000255" key="2"/>
<evidence type="ECO:0000305" key="3"/>
<feature type="transit peptide" description="Mitochondrion" evidence="2">
    <location>
        <begin position="1"/>
        <end status="unknown"/>
    </location>
</feature>
<feature type="chain" id="PRO_0000003609" description="Probable cytochrome P450 12a5, mitochondrial">
    <location>
        <begin status="unknown"/>
        <end position="536"/>
    </location>
</feature>
<feature type="binding site" description="axial binding residue" evidence="1">
    <location>
        <position position="482"/>
    </location>
    <ligand>
        <name>heme</name>
        <dbReference type="ChEBI" id="CHEBI:30413"/>
    </ligand>
    <ligandPart>
        <name>Fe</name>
        <dbReference type="ChEBI" id="CHEBI:18248"/>
    </ligandPart>
</feature>
<feature type="sequence conflict" description="In Ref. 4; AAM76202." evidence="3" ref="4">
    <original>G</original>
    <variation>S</variation>
    <location>
        <position position="66"/>
    </location>
</feature>
<feature type="sequence conflict" description="In Ref. 1; AAR88135." evidence="3" ref="1">
    <original>L</original>
    <variation>M</variation>
    <location>
        <position position="72"/>
    </location>
</feature>
<protein>
    <recommendedName>
        <fullName>Probable cytochrome P450 12a5, mitochondrial</fullName>
        <ecNumber>1.14.-.-</ecNumber>
    </recommendedName>
    <alternativeName>
        <fullName>CYPXIIA5</fullName>
    </alternativeName>
</protein>
<keyword id="KW-0349">Heme</keyword>
<keyword id="KW-0408">Iron</keyword>
<keyword id="KW-0472">Membrane</keyword>
<keyword id="KW-0479">Metal-binding</keyword>
<keyword id="KW-0496">Mitochondrion</keyword>
<keyword id="KW-0503">Monooxygenase</keyword>
<keyword id="KW-0560">Oxidoreductase</keyword>
<keyword id="KW-1185">Reference proteome</keyword>
<keyword id="KW-0809">Transit peptide</keyword>
<comment type="cofactor">
    <cofactor evidence="1">
        <name>heme</name>
        <dbReference type="ChEBI" id="CHEBI:30413"/>
    </cofactor>
</comment>
<comment type="subcellular location">
    <subcellularLocation>
        <location evidence="3">Mitochondrion membrane</location>
    </subcellularLocation>
</comment>
<comment type="similarity">
    <text evidence="3">Belongs to the cytochrome P450 family.</text>
</comment>
<accession>Q9VE01</accession>
<accession>Q6SEI2</accession>
<accession>Q8MQI5</accession>
<gene>
    <name type="primary">Cyp12a5</name>
    <name type="ORF">CG11821</name>
</gene>
<name>C12A5_DROME</name>
<proteinExistence type="evidence at transcript level"/>
<organism>
    <name type="scientific">Drosophila melanogaster</name>
    <name type="common">Fruit fly</name>
    <dbReference type="NCBI Taxonomy" id="7227"/>
    <lineage>
        <taxon>Eukaryota</taxon>
        <taxon>Metazoa</taxon>
        <taxon>Ecdysozoa</taxon>
        <taxon>Arthropoda</taxon>
        <taxon>Hexapoda</taxon>
        <taxon>Insecta</taxon>
        <taxon>Pterygota</taxon>
        <taxon>Neoptera</taxon>
        <taxon>Endopterygota</taxon>
        <taxon>Diptera</taxon>
        <taxon>Brachycera</taxon>
        <taxon>Muscomorpha</taxon>
        <taxon>Ephydroidea</taxon>
        <taxon>Drosophilidae</taxon>
        <taxon>Drosophila</taxon>
        <taxon>Sophophora</taxon>
    </lineage>
</organism>